<accession>A8GT67</accession>
<organism>
    <name type="scientific">Rickettsia rickettsii (strain Sheila Smith)</name>
    <dbReference type="NCBI Taxonomy" id="392021"/>
    <lineage>
        <taxon>Bacteria</taxon>
        <taxon>Pseudomonadati</taxon>
        <taxon>Pseudomonadota</taxon>
        <taxon>Alphaproteobacteria</taxon>
        <taxon>Rickettsiales</taxon>
        <taxon>Rickettsiaceae</taxon>
        <taxon>Rickettsieae</taxon>
        <taxon>Rickettsia</taxon>
        <taxon>spotted fever group</taxon>
    </lineage>
</organism>
<gene>
    <name evidence="1" type="primary">rplW</name>
    <name type="ordered locus">A1G_05545</name>
</gene>
<protein>
    <recommendedName>
        <fullName evidence="1">Large ribosomal subunit protein uL23</fullName>
    </recommendedName>
    <alternativeName>
        <fullName evidence="2">50S ribosomal protein L23</fullName>
    </alternativeName>
</protein>
<comment type="function">
    <text evidence="1">One of the early assembly proteins it binds 23S rRNA. One of the proteins that surrounds the polypeptide exit tunnel on the outside of the ribosome. Forms the main docking site for trigger factor binding to the ribosome.</text>
</comment>
<comment type="subunit">
    <text evidence="1">Part of the 50S ribosomal subunit. Contacts protein L29, and trigger factor when it is bound to the ribosome.</text>
</comment>
<comment type="similarity">
    <text evidence="1">Belongs to the universal ribosomal protein uL23 family.</text>
</comment>
<name>RL23_RICRS</name>
<keyword id="KW-0687">Ribonucleoprotein</keyword>
<keyword id="KW-0689">Ribosomal protein</keyword>
<keyword id="KW-0694">RNA-binding</keyword>
<keyword id="KW-0699">rRNA-binding</keyword>
<sequence length="98" mass="11383">MSAYKYYDLIRKPIITEKTTTLSEQNKYAFYVDKFAEKLTLKKAIEEIFKVKVKKVNILNVKGKKKRFKGIIGTQINRKKAIVTLEKDHNIDFAGGIK</sequence>
<evidence type="ECO:0000255" key="1">
    <source>
        <dbReference type="HAMAP-Rule" id="MF_01369"/>
    </source>
</evidence>
<evidence type="ECO:0000305" key="2"/>
<proteinExistence type="inferred from homology"/>
<feature type="chain" id="PRO_1000068151" description="Large ribosomal subunit protein uL23">
    <location>
        <begin position="1"/>
        <end position="98"/>
    </location>
</feature>
<dbReference type="EMBL" id="CP000848">
    <property type="protein sequence ID" value="ABV76592.1"/>
    <property type="molecule type" value="Genomic_DNA"/>
</dbReference>
<dbReference type="RefSeq" id="WP_012151150.1">
    <property type="nucleotide sequence ID" value="NZ_CP121767.1"/>
</dbReference>
<dbReference type="SMR" id="A8GT67"/>
<dbReference type="GeneID" id="79937668"/>
<dbReference type="KEGG" id="rri:A1G_05545"/>
<dbReference type="HOGENOM" id="CLU_037562_3_2_5"/>
<dbReference type="Proteomes" id="UP000006832">
    <property type="component" value="Chromosome"/>
</dbReference>
<dbReference type="GO" id="GO:1990904">
    <property type="term" value="C:ribonucleoprotein complex"/>
    <property type="evidence" value="ECO:0007669"/>
    <property type="project" value="UniProtKB-KW"/>
</dbReference>
<dbReference type="GO" id="GO:0005840">
    <property type="term" value="C:ribosome"/>
    <property type="evidence" value="ECO:0007669"/>
    <property type="project" value="UniProtKB-KW"/>
</dbReference>
<dbReference type="GO" id="GO:0019843">
    <property type="term" value="F:rRNA binding"/>
    <property type="evidence" value="ECO:0007669"/>
    <property type="project" value="UniProtKB-UniRule"/>
</dbReference>
<dbReference type="GO" id="GO:0003735">
    <property type="term" value="F:structural constituent of ribosome"/>
    <property type="evidence" value="ECO:0007669"/>
    <property type="project" value="InterPro"/>
</dbReference>
<dbReference type="GO" id="GO:0006412">
    <property type="term" value="P:translation"/>
    <property type="evidence" value="ECO:0007669"/>
    <property type="project" value="UniProtKB-UniRule"/>
</dbReference>
<dbReference type="FunFam" id="3.30.70.330:FF:000001">
    <property type="entry name" value="50S ribosomal protein L23"/>
    <property type="match status" value="1"/>
</dbReference>
<dbReference type="Gene3D" id="3.30.70.330">
    <property type="match status" value="1"/>
</dbReference>
<dbReference type="HAMAP" id="MF_01369_B">
    <property type="entry name" value="Ribosomal_uL23_B"/>
    <property type="match status" value="1"/>
</dbReference>
<dbReference type="InterPro" id="IPR012677">
    <property type="entry name" value="Nucleotide-bd_a/b_plait_sf"/>
</dbReference>
<dbReference type="InterPro" id="IPR013025">
    <property type="entry name" value="Ribosomal_uL23-like"/>
</dbReference>
<dbReference type="InterPro" id="IPR012678">
    <property type="entry name" value="Ribosomal_uL23/eL15/eS24_sf"/>
</dbReference>
<dbReference type="NCBIfam" id="NF004359">
    <property type="entry name" value="PRK05738.1-3"/>
    <property type="match status" value="1"/>
</dbReference>
<dbReference type="NCBIfam" id="NF004363">
    <property type="entry name" value="PRK05738.2-4"/>
    <property type="match status" value="1"/>
</dbReference>
<dbReference type="PANTHER" id="PTHR11620">
    <property type="entry name" value="60S RIBOSOMAL PROTEIN L23A"/>
    <property type="match status" value="1"/>
</dbReference>
<dbReference type="Pfam" id="PF00276">
    <property type="entry name" value="Ribosomal_L23"/>
    <property type="match status" value="1"/>
</dbReference>
<dbReference type="SUPFAM" id="SSF54189">
    <property type="entry name" value="Ribosomal proteins S24e, L23 and L15e"/>
    <property type="match status" value="1"/>
</dbReference>
<reference key="1">
    <citation type="submission" date="2007-09" db="EMBL/GenBank/DDBJ databases">
        <title>Complete genome sequence of Rickettsia rickettsii.</title>
        <authorList>
            <person name="Madan A."/>
            <person name="Fahey J."/>
            <person name="Helton E."/>
            <person name="Ketteman M."/>
            <person name="Madan A."/>
            <person name="Rodrigues S."/>
            <person name="Sanchez A."/>
            <person name="Dasch G."/>
            <person name="Eremeeva M."/>
        </authorList>
    </citation>
    <scope>NUCLEOTIDE SEQUENCE [LARGE SCALE GENOMIC DNA]</scope>
    <source>
        <strain>Sheila Smith</strain>
    </source>
</reference>